<organism>
    <name type="scientific">Pseudomonas aeruginosa (strain ATCC 15692 / DSM 22644 / CIP 104116 / JCM 14847 / LMG 12228 / 1C / PRS 101 / PAO1)</name>
    <dbReference type="NCBI Taxonomy" id="208964"/>
    <lineage>
        <taxon>Bacteria</taxon>
        <taxon>Pseudomonadati</taxon>
        <taxon>Pseudomonadota</taxon>
        <taxon>Gammaproteobacteria</taxon>
        <taxon>Pseudomonadales</taxon>
        <taxon>Pseudomonadaceae</taxon>
        <taxon>Pseudomonas</taxon>
    </lineage>
</organism>
<evidence type="ECO:0000250" key="1"/>
<evidence type="ECO:0000269" key="2">
    <source>
    </source>
</evidence>
<evidence type="ECO:0000305" key="3"/>
<reference key="1">
    <citation type="journal article" date="2000" name="Nature">
        <title>Complete genome sequence of Pseudomonas aeruginosa PAO1, an opportunistic pathogen.</title>
        <authorList>
            <person name="Stover C.K."/>
            <person name="Pham X.-Q.T."/>
            <person name="Erwin A.L."/>
            <person name="Mizoguchi S.D."/>
            <person name="Warrener P."/>
            <person name="Hickey M.J."/>
            <person name="Brinkman F.S.L."/>
            <person name="Hufnagle W.O."/>
            <person name="Kowalik D.J."/>
            <person name="Lagrou M."/>
            <person name="Garber R.L."/>
            <person name="Goltry L."/>
            <person name="Tolentino E."/>
            <person name="Westbrock-Wadman S."/>
            <person name="Yuan Y."/>
            <person name="Brody L.L."/>
            <person name="Coulter S.N."/>
            <person name="Folger K.R."/>
            <person name="Kas A."/>
            <person name="Larbig K."/>
            <person name="Lim R.M."/>
            <person name="Smith K.A."/>
            <person name="Spencer D.H."/>
            <person name="Wong G.K.-S."/>
            <person name="Wu Z."/>
            <person name="Paulsen I.T."/>
            <person name="Reizer J."/>
            <person name="Saier M.H. Jr."/>
            <person name="Hancock R.E.W."/>
            <person name="Lory S."/>
            <person name="Olson M.V."/>
        </authorList>
    </citation>
    <scope>NUCLEOTIDE SEQUENCE [LARGE SCALE GENOMIC DNA]</scope>
    <source>
        <strain>ATCC 15692 / DSM 22644 / CIP 104116 / JCM 14847 / LMG 12228 / 1C / PRS 101 / PAO1</strain>
    </source>
</reference>
<reference key="2">
    <citation type="journal article" date="1998" name="Microbiology">
        <title>Regulation of the sulfate starvation response in Pseudomonas aeruginosa: role of cysteine biosynthetic intermediates.</title>
        <authorList>
            <person name="Hummerjohann J."/>
            <person name="Kuttel E."/>
            <person name="Quadroni M."/>
            <person name="Ragaller J."/>
            <person name="Leisinger T."/>
            <person name="Kertesz M.A."/>
        </authorList>
    </citation>
    <scope>PROTEIN SEQUENCE OF 2-14</scope>
    <source>
        <strain>ATCC 15692 / DSM 22644 / CIP 104116 / JCM 14847 / LMG 12228 / 1C / PRS 101 / PAO1</strain>
    </source>
</reference>
<accession>Q9HYG2</accession>
<comment type="function">
    <text evidence="1">Catalyzes the desulfonation of aliphatic sulfonates.</text>
</comment>
<comment type="catalytic activity">
    <reaction>
        <text>an alkanesulfonate + FMNH2 + O2 = an aldehyde + FMN + sulfite + H2O + 2 H(+)</text>
        <dbReference type="Rhea" id="RHEA:23064"/>
        <dbReference type="ChEBI" id="CHEBI:15377"/>
        <dbReference type="ChEBI" id="CHEBI:15378"/>
        <dbReference type="ChEBI" id="CHEBI:15379"/>
        <dbReference type="ChEBI" id="CHEBI:17359"/>
        <dbReference type="ChEBI" id="CHEBI:17478"/>
        <dbReference type="ChEBI" id="CHEBI:57618"/>
        <dbReference type="ChEBI" id="CHEBI:58210"/>
        <dbReference type="ChEBI" id="CHEBI:134249"/>
        <dbReference type="EC" id="1.14.14.5"/>
    </reaction>
</comment>
<comment type="induction">
    <text>Repressed by sulfate, cysteine, or thiocyanate.</text>
</comment>
<comment type="miscellaneous">
    <text evidence="1">FMNH(2) which is absolutely required for this enzymatic reaction, is provided by SsuE.</text>
</comment>
<comment type="similarity">
    <text evidence="3">Belongs to the SsuD family.</text>
</comment>
<keyword id="KW-0903">Direct protein sequencing</keyword>
<keyword id="KW-0285">Flavoprotein</keyword>
<keyword id="KW-0288">FMN</keyword>
<keyword id="KW-0503">Monooxygenase</keyword>
<keyword id="KW-0560">Oxidoreductase</keyword>
<keyword id="KW-1185">Reference proteome</keyword>
<proteinExistence type="evidence at protein level"/>
<gene>
    <name type="primary">ssuD</name>
    <name type="ordered locus">PA3444</name>
</gene>
<protein>
    <recommendedName>
        <fullName>Alkanesulfonate monooxygenase</fullName>
        <ecNumber>1.14.14.5</ecNumber>
    </recommendedName>
    <alternativeName>
        <fullName>FMNH2-dependent aliphatic sulfonate monooxygenase</fullName>
    </alternativeName>
    <alternativeName>
        <fullName>PA13</fullName>
    </alternativeName>
</protein>
<sequence>MSLEIFWFLPTHGDGHYLGTTQGARAVDHGYLQQIAQAADRLGFGGVLIPTGRSCEDSWLVAASLIPVTQRLKFLVALRPGIISPTVAARQAATLDRLSNGRALFNLVTGGDPDELAGDGLHLSHAERYEASVEFTRIWRRVLEGETVDYAGKHIQVKGAKLLYPPLQQPRPPLYFGGSSEAAQDLAAEQVELYLTWGEPPAAVAEKIAQVREKAARQGRQVRFGIRLHVIVRETSEEAWQAADRLIAHLDDDTIARAQASLARFDSVGQQRMAALHGGSRDNLEVSPNLWAGVGLVRGGAGTALVGDGPTVAARVREYAELGIDTFIFSGYPHLEESYRVAELLFPHLDVQRPAQPEGRGYVSPFGEMVANDILPRQAAQS</sequence>
<dbReference type="EC" id="1.14.14.5"/>
<dbReference type="EMBL" id="AE004091">
    <property type="protein sequence ID" value="AAG06832.1"/>
    <property type="molecule type" value="Genomic_DNA"/>
</dbReference>
<dbReference type="PIR" id="A83215">
    <property type="entry name" value="A83215"/>
</dbReference>
<dbReference type="RefSeq" id="NP_252134.1">
    <property type="nucleotide sequence ID" value="NC_002516.2"/>
</dbReference>
<dbReference type="RefSeq" id="WP_003091910.1">
    <property type="nucleotide sequence ID" value="NZ_QZGE01000037.1"/>
</dbReference>
<dbReference type="SMR" id="Q9HYG2"/>
<dbReference type="FunCoup" id="Q9HYG2">
    <property type="interactions" value="208"/>
</dbReference>
<dbReference type="STRING" id="208964.PA3444"/>
<dbReference type="PaxDb" id="208964-PA3444"/>
<dbReference type="DNASU" id="879163"/>
<dbReference type="GeneID" id="879163"/>
<dbReference type="KEGG" id="pae:PA3444"/>
<dbReference type="PATRIC" id="fig|208964.12.peg.3606"/>
<dbReference type="PseudoCAP" id="PA3444"/>
<dbReference type="HOGENOM" id="CLU_027853_1_0_6"/>
<dbReference type="InParanoid" id="Q9HYG2"/>
<dbReference type="OrthoDB" id="9814695at2"/>
<dbReference type="PhylomeDB" id="Q9HYG2"/>
<dbReference type="BioCyc" id="PAER208964:G1FZ6-3512-MONOMER"/>
<dbReference type="Proteomes" id="UP000002438">
    <property type="component" value="Chromosome"/>
</dbReference>
<dbReference type="GO" id="GO:0008726">
    <property type="term" value="F:alkanesulfonate monooxygenase activity"/>
    <property type="evidence" value="ECO:0000318"/>
    <property type="project" value="GO_Central"/>
</dbReference>
<dbReference type="GO" id="GO:0046306">
    <property type="term" value="P:alkanesulfonate catabolic process"/>
    <property type="evidence" value="ECO:0000318"/>
    <property type="project" value="GO_Central"/>
</dbReference>
<dbReference type="CDD" id="cd01094">
    <property type="entry name" value="Alkanesulfonate_monoxygenase"/>
    <property type="match status" value="1"/>
</dbReference>
<dbReference type="FunFam" id="3.20.20.30:FF:000001">
    <property type="entry name" value="Alkanesulfonate monooxygenase"/>
    <property type="match status" value="1"/>
</dbReference>
<dbReference type="Gene3D" id="3.20.20.30">
    <property type="entry name" value="Luciferase-like domain"/>
    <property type="match status" value="1"/>
</dbReference>
<dbReference type="HAMAP" id="MF_01229">
    <property type="entry name" value="Alkanesulf_monooxygen"/>
    <property type="match status" value="1"/>
</dbReference>
<dbReference type="InterPro" id="IPR019911">
    <property type="entry name" value="Alkanesulphonate_mOase_FMN-dep"/>
</dbReference>
<dbReference type="InterPro" id="IPR011251">
    <property type="entry name" value="Luciferase-like_dom"/>
</dbReference>
<dbReference type="InterPro" id="IPR036661">
    <property type="entry name" value="Luciferase-like_sf"/>
</dbReference>
<dbReference type="InterPro" id="IPR050172">
    <property type="entry name" value="SsuD_RutA_monooxygenase"/>
</dbReference>
<dbReference type="NCBIfam" id="TIGR03565">
    <property type="entry name" value="alk_sulf_monoox"/>
    <property type="match status" value="1"/>
</dbReference>
<dbReference type="NCBIfam" id="NF001939">
    <property type="entry name" value="PRK00719.1"/>
    <property type="match status" value="1"/>
</dbReference>
<dbReference type="PANTHER" id="PTHR42847">
    <property type="entry name" value="ALKANESULFONATE MONOOXYGENASE"/>
    <property type="match status" value="1"/>
</dbReference>
<dbReference type="PANTHER" id="PTHR42847:SF4">
    <property type="entry name" value="ALKANESULFONATE MONOOXYGENASE-RELATED"/>
    <property type="match status" value="1"/>
</dbReference>
<dbReference type="Pfam" id="PF00296">
    <property type="entry name" value="Bac_luciferase"/>
    <property type="match status" value="1"/>
</dbReference>
<dbReference type="SUPFAM" id="SSF51679">
    <property type="entry name" value="Bacterial luciferase-like"/>
    <property type="match status" value="1"/>
</dbReference>
<feature type="initiator methionine" description="Removed" evidence="2">
    <location>
        <position position="1"/>
    </location>
</feature>
<feature type="chain" id="PRO_0000216711" description="Alkanesulfonate monooxygenase">
    <location>
        <begin position="2"/>
        <end position="382"/>
    </location>
</feature>
<feature type="sequence conflict" description="In Ref. 2; AA sequence." evidence="3" ref="2">
    <original>W</original>
    <variation>A</variation>
    <location>
        <position position="7"/>
    </location>
</feature>
<name>SSUD_PSEAE</name>